<reference key="1">
    <citation type="submission" date="2006-03" db="EMBL/GenBank/DDBJ databases">
        <title>Complete sequence of chromosome of Nitrobacter hamburgensis X14.</title>
        <authorList>
            <consortium name="US DOE Joint Genome Institute"/>
            <person name="Copeland A."/>
            <person name="Lucas S."/>
            <person name="Lapidus A."/>
            <person name="Barry K."/>
            <person name="Detter J.C."/>
            <person name="Glavina del Rio T."/>
            <person name="Hammon N."/>
            <person name="Israni S."/>
            <person name="Dalin E."/>
            <person name="Tice H."/>
            <person name="Pitluck S."/>
            <person name="Chain P."/>
            <person name="Malfatti S."/>
            <person name="Shin M."/>
            <person name="Vergez L."/>
            <person name="Schmutz J."/>
            <person name="Larimer F."/>
            <person name="Land M."/>
            <person name="Hauser L."/>
            <person name="Kyrpides N."/>
            <person name="Ivanova N."/>
            <person name="Ward B."/>
            <person name="Arp D."/>
            <person name="Klotz M."/>
            <person name="Stein L."/>
            <person name="O'Mullan G."/>
            <person name="Starkenburg S."/>
            <person name="Sayavedra L."/>
            <person name="Poret-Peterson A.T."/>
            <person name="Gentry M.E."/>
            <person name="Bruce D."/>
            <person name="Richardson P."/>
        </authorList>
    </citation>
    <scope>NUCLEOTIDE SEQUENCE [LARGE SCALE GENOMIC DNA]</scope>
    <source>
        <strain>DSM 10229 / NCIMB 13809 / X14</strain>
    </source>
</reference>
<accession>Q1QRU1</accession>
<sequence length="632" mass="68161">MGKVIGIDLGTTNSCVAVMDGKTPKVIENAEGMRTTPSIVAFSDDGERLVGQPAKRQAVTNPERTIFAVKRLIGRRYDDPTVEKDKHLVPYKIAKAGNGDAWVEVDGKTYSPSQISAFTLQKMKETAEAHLGQKVDQAVITVPAYFNDAQRQATKDAGKIAGLEVLRIINEPTAAALAYGLDKAKQGTIAVYDLGGGTFDVSILEIGDGVFEVKSTNGDTFLGGEDFDMRLVSYLADEFQKEQGINLRNDKLALQRLKEAAEKAKIELSSTTQTEINLPFITADQSGPKHLTMKLTRAKFEALVDDLVQKTIEPCRKALKDAGLTAGEIGEVVLVGGMTRMPKVQEVVKQLFGKEPHKGVNPDEVVAIGAAIQAGVLQGDVKDVLLLDVTPLSLGIETLGGVFTRIIDRNTTIPTKKSQVFSTAEDSQNAVTIRVFQGEREMAADNKILGQFDLMGIPPAPRGMPQIEVTFDIDANGIVNVSAKDKATGKEQQIRIQASGGLSEADIDKMVKDAEANAIEDKKRREAVDAKNHADSLVHSTEKALAEHGSKIEDSERRAIEDAVSDLKEALKGDDAEAIKAKTNTLAQASMKLGEAMYKQQAEADAAKDAAKDDVVDAEFTEVDDDKNKKSA</sequence>
<evidence type="ECO:0000255" key="1">
    <source>
        <dbReference type="HAMAP-Rule" id="MF_00332"/>
    </source>
</evidence>
<evidence type="ECO:0000256" key="2">
    <source>
        <dbReference type="SAM" id="MobiDB-lite"/>
    </source>
</evidence>
<name>DNAK_NITHX</name>
<proteinExistence type="inferred from homology"/>
<comment type="function">
    <text evidence="1">Acts as a chaperone.</text>
</comment>
<comment type="induction">
    <text evidence="1">By stress conditions e.g. heat shock.</text>
</comment>
<comment type="similarity">
    <text evidence="1">Belongs to the heat shock protein 70 family.</text>
</comment>
<keyword id="KW-0067">ATP-binding</keyword>
<keyword id="KW-0143">Chaperone</keyword>
<keyword id="KW-0547">Nucleotide-binding</keyword>
<keyword id="KW-0597">Phosphoprotein</keyword>
<keyword id="KW-1185">Reference proteome</keyword>
<keyword id="KW-0346">Stress response</keyword>
<gene>
    <name evidence="1" type="primary">dnaK</name>
    <name type="ordered locus">Nham_0155</name>
</gene>
<dbReference type="EMBL" id="CP000319">
    <property type="protein sequence ID" value="ABE61056.1"/>
    <property type="molecule type" value="Genomic_DNA"/>
</dbReference>
<dbReference type="RefSeq" id="WP_011508762.1">
    <property type="nucleotide sequence ID" value="NC_007964.1"/>
</dbReference>
<dbReference type="SMR" id="Q1QRU1"/>
<dbReference type="STRING" id="323097.Nham_0155"/>
<dbReference type="KEGG" id="nha:Nham_0155"/>
<dbReference type="eggNOG" id="COG0443">
    <property type="taxonomic scope" value="Bacteria"/>
</dbReference>
<dbReference type="HOGENOM" id="CLU_005965_2_1_5"/>
<dbReference type="OrthoDB" id="9766019at2"/>
<dbReference type="Proteomes" id="UP000001953">
    <property type="component" value="Chromosome"/>
</dbReference>
<dbReference type="GO" id="GO:0005524">
    <property type="term" value="F:ATP binding"/>
    <property type="evidence" value="ECO:0007669"/>
    <property type="project" value="UniProtKB-UniRule"/>
</dbReference>
<dbReference type="GO" id="GO:0140662">
    <property type="term" value="F:ATP-dependent protein folding chaperone"/>
    <property type="evidence" value="ECO:0007669"/>
    <property type="project" value="InterPro"/>
</dbReference>
<dbReference type="GO" id="GO:0051082">
    <property type="term" value="F:unfolded protein binding"/>
    <property type="evidence" value="ECO:0007669"/>
    <property type="project" value="InterPro"/>
</dbReference>
<dbReference type="CDD" id="cd11733">
    <property type="entry name" value="ASKHA_NBD_HSP70_HSPA9"/>
    <property type="match status" value="1"/>
</dbReference>
<dbReference type="FunFam" id="2.60.34.10:FF:000014">
    <property type="entry name" value="Chaperone protein DnaK HSP70"/>
    <property type="match status" value="1"/>
</dbReference>
<dbReference type="FunFam" id="3.30.420.40:FF:000020">
    <property type="entry name" value="Chaperone protein HscA homolog"/>
    <property type="match status" value="1"/>
</dbReference>
<dbReference type="FunFam" id="1.20.1270.10:FF:000001">
    <property type="entry name" value="Molecular chaperone DnaK"/>
    <property type="match status" value="1"/>
</dbReference>
<dbReference type="FunFam" id="3.30.420.40:FF:000004">
    <property type="entry name" value="Molecular chaperone DnaK"/>
    <property type="match status" value="1"/>
</dbReference>
<dbReference type="FunFam" id="3.90.640.10:FF:000003">
    <property type="entry name" value="Molecular chaperone DnaK"/>
    <property type="match status" value="1"/>
</dbReference>
<dbReference type="Gene3D" id="1.20.1270.10">
    <property type="match status" value="1"/>
</dbReference>
<dbReference type="Gene3D" id="3.30.420.40">
    <property type="match status" value="2"/>
</dbReference>
<dbReference type="Gene3D" id="3.90.640.10">
    <property type="entry name" value="Actin, Chain A, domain 4"/>
    <property type="match status" value="1"/>
</dbReference>
<dbReference type="Gene3D" id="2.60.34.10">
    <property type="entry name" value="Substrate Binding Domain Of DNAk, Chain A, domain 1"/>
    <property type="match status" value="1"/>
</dbReference>
<dbReference type="HAMAP" id="MF_00332">
    <property type="entry name" value="DnaK"/>
    <property type="match status" value="1"/>
</dbReference>
<dbReference type="InterPro" id="IPR043129">
    <property type="entry name" value="ATPase_NBD"/>
</dbReference>
<dbReference type="InterPro" id="IPR012725">
    <property type="entry name" value="Chaperone_DnaK"/>
</dbReference>
<dbReference type="InterPro" id="IPR018181">
    <property type="entry name" value="Heat_shock_70_CS"/>
</dbReference>
<dbReference type="InterPro" id="IPR029048">
    <property type="entry name" value="HSP70_C_sf"/>
</dbReference>
<dbReference type="InterPro" id="IPR029047">
    <property type="entry name" value="HSP70_peptide-bd_sf"/>
</dbReference>
<dbReference type="InterPro" id="IPR013126">
    <property type="entry name" value="Hsp_70_fam"/>
</dbReference>
<dbReference type="NCBIfam" id="NF001413">
    <property type="entry name" value="PRK00290.1"/>
    <property type="match status" value="1"/>
</dbReference>
<dbReference type="NCBIfam" id="NF003520">
    <property type="entry name" value="PRK05183.1"/>
    <property type="match status" value="1"/>
</dbReference>
<dbReference type="NCBIfam" id="TIGR02350">
    <property type="entry name" value="prok_dnaK"/>
    <property type="match status" value="1"/>
</dbReference>
<dbReference type="PANTHER" id="PTHR19375">
    <property type="entry name" value="HEAT SHOCK PROTEIN 70KDA"/>
    <property type="match status" value="1"/>
</dbReference>
<dbReference type="Pfam" id="PF00012">
    <property type="entry name" value="HSP70"/>
    <property type="match status" value="1"/>
</dbReference>
<dbReference type="PRINTS" id="PR00301">
    <property type="entry name" value="HEATSHOCK70"/>
</dbReference>
<dbReference type="SUPFAM" id="SSF53067">
    <property type="entry name" value="Actin-like ATPase domain"/>
    <property type="match status" value="2"/>
</dbReference>
<dbReference type="SUPFAM" id="SSF100934">
    <property type="entry name" value="Heat shock protein 70kD (HSP70), C-terminal subdomain"/>
    <property type="match status" value="1"/>
</dbReference>
<dbReference type="SUPFAM" id="SSF100920">
    <property type="entry name" value="Heat shock protein 70kD (HSP70), peptide-binding domain"/>
    <property type="match status" value="1"/>
</dbReference>
<dbReference type="PROSITE" id="PS00297">
    <property type="entry name" value="HSP70_1"/>
    <property type="match status" value="1"/>
</dbReference>
<dbReference type="PROSITE" id="PS00329">
    <property type="entry name" value="HSP70_2"/>
    <property type="match status" value="1"/>
</dbReference>
<dbReference type="PROSITE" id="PS01036">
    <property type="entry name" value="HSP70_3"/>
    <property type="match status" value="1"/>
</dbReference>
<organism>
    <name type="scientific">Nitrobacter hamburgensis (strain DSM 10229 / NCIMB 13809 / X14)</name>
    <dbReference type="NCBI Taxonomy" id="323097"/>
    <lineage>
        <taxon>Bacteria</taxon>
        <taxon>Pseudomonadati</taxon>
        <taxon>Pseudomonadota</taxon>
        <taxon>Alphaproteobacteria</taxon>
        <taxon>Hyphomicrobiales</taxon>
        <taxon>Nitrobacteraceae</taxon>
        <taxon>Nitrobacter</taxon>
    </lineage>
</organism>
<protein>
    <recommendedName>
        <fullName evidence="1">Chaperone protein DnaK</fullName>
    </recommendedName>
    <alternativeName>
        <fullName evidence="1">HSP70</fullName>
    </alternativeName>
    <alternativeName>
        <fullName evidence="1">Heat shock 70 kDa protein</fullName>
    </alternativeName>
    <alternativeName>
        <fullName evidence="1">Heat shock protein 70</fullName>
    </alternativeName>
</protein>
<feature type="chain" id="PRO_1000059617" description="Chaperone protein DnaK">
    <location>
        <begin position="1"/>
        <end position="632"/>
    </location>
</feature>
<feature type="region of interest" description="Disordered" evidence="2">
    <location>
        <begin position="524"/>
        <end position="557"/>
    </location>
</feature>
<feature type="modified residue" description="Phosphothreonine; by autocatalysis" evidence="1">
    <location>
        <position position="198"/>
    </location>
</feature>